<feature type="chain" id="PRO_1000199422" description="Proline--tRNA ligase">
    <location>
        <begin position="1"/>
        <end position="569"/>
    </location>
</feature>
<keyword id="KW-0030">Aminoacyl-tRNA synthetase</keyword>
<keyword id="KW-0067">ATP-binding</keyword>
<keyword id="KW-0963">Cytoplasm</keyword>
<keyword id="KW-0436">Ligase</keyword>
<keyword id="KW-0547">Nucleotide-binding</keyword>
<keyword id="KW-0648">Protein biosynthesis</keyword>
<keyword id="KW-1185">Reference proteome</keyword>
<dbReference type="EC" id="6.1.1.15" evidence="1"/>
<dbReference type="EMBL" id="CP000961">
    <property type="protein sequence ID" value="ACA87521.1"/>
    <property type="molecule type" value="Genomic_DNA"/>
</dbReference>
<dbReference type="RefSeq" id="WP_012325857.1">
    <property type="nucleotide sequence ID" value="NC_010506.1"/>
</dbReference>
<dbReference type="SMR" id="B1KNR3"/>
<dbReference type="STRING" id="392500.Swoo_3251"/>
<dbReference type="KEGG" id="swd:Swoo_3251"/>
<dbReference type="eggNOG" id="COG0442">
    <property type="taxonomic scope" value="Bacteria"/>
</dbReference>
<dbReference type="HOGENOM" id="CLU_016739_0_0_6"/>
<dbReference type="Proteomes" id="UP000002168">
    <property type="component" value="Chromosome"/>
</dbReference>
<dbReference type="GO" id="GO:0005829">
    <property type="term" value="C:cytosol"/>
    <property type="evidence" value="ECO:0007669"/>
    <property type="project" value="TreeGrafter"/>
</dbReference>
<dbReference type="GO" id="GO:0002161">
    <property type="term" value="F:aminoacyl-tRNA deacylase activity"/>
    <property type="evidence" value="ECO:0007669"/>
    <property type="project" value="InterPro"/>
</dbReference>
<dbReference type="GO" id="GO:0005524">
    <property type="term" value="F:ATP binding"/>
    <property type="evidence" value="ECO:0007669"/>
    <property type="project" value="UniProtKB-UniRule"/>
</dbReference>
<dbReference type="GO" id="GO:0004827">
    <property type="term" value="F:proline-tRNA ligase activity"/>
    <property type="evidence" value="ECO:0007669"/>
    <property type="project" value="UniProtKB-UniRule"/>
</dbReference>
<dbReference type="GO" id="GO:0006433">
    <property type="term" value="P:prolyl-tRNA aminoacylation"/>
    <property type="evidence" value="ECO:0007669"/>
    <property type="project" value="UniProtKB-UniRule"/>
</dbReference>
<dbReference type="CDD" id="cd04334">
    <property type="entry name" value="ProRS-INS"/>
    <property type="match status" value="1"/>
</dbReference>
<dbReference type="CDD" id="cd00861">
    <property type="entry name" value="ProRS_anticodon_short"/>
    <property type="match status" value="1"/>
</dbReference>
<dbReference type="CDD" id="cd00779">
    <property type="entry name" value="ProRS_core_prok"/>
    <property type="match status" value="1"/>
</dbReference>
<dbReference type="FunFam" id="3.30.930.10:FF:000043">
    <property type="entry name" value="Proline--tRNA ligase"/>
    <property type="match status" value="1"/>
</dbReference>
<dbReference type="FunFam" id="3.30.930.10:FF:000062">
    <property type="entry name" value="Proline--tRNA ligase"/>
    <property type="match status" value="1"/>
</dbReference>
<dbReference type="FunFam" id="3.40.50.800:FF:000006">
    <property type="entry name" value="Proline--tRNA ligase"/>
    <property type="match status" value="1"/>
</dbReference>
<dbReference type="FunFam" id="3.90.960.10:FF:000001">
    <property type="entry name" value="Proline--tRNA ligase"/>
    <property type="match status" value="1"/>
</dbReference>
<dbReference type="Gene3D" id="3.40.50.800">
    <property type="entry name" value="Anticodon-binding domain"/>
    <property type="match status" value="1"/>
</dbReference>
<dbReference type="Gene3D" id="3.30.930.10">
    <property type="entry name" value="Bira Bifunctional Protein, Domain 2"/>
    <property type="match status" value="2"/>
</dbReference>
<dbReference type="HAMAP" id="MF_01569">
    <property type="entry name" value="Pro_tRNA_synth_type1"/>
    <property type="match status" value="1"/>
</dbReference>
<dbReference type="InterPro" id="IPR002314">
    <property type="entry name" value="aa-tRNA-synt_IIb"/>
</dbReference>
<dbReference type="InterPro" id="IPR006195">
    <property type="entry name" value="aa-tRNA-synth_II"/>
</dbReference>
<dbReference type="InterPro" id="IPR045864">
    <property type="entry name" value="aa-tRNA-synth_II/BPL/LPL"/>
</dbReference>
<dbReference type="InterPro" id="IPR004154">
    <property type="entry name" value="Anticodon-bd"/>
</dbReference>
<dbReference type="InterPro" id="IPR036621">
    <property type="entry name" value="Anticodon-bd_dom_sf"/>
</dbReference>
<dbReference type="InterPro" id="IPR002316">
    <property type="entry name" value="Pro-tRNA-ligase_IIa"/>
</dbReference>
<dbReference type="InterPro" id="IPR004500">
    <property type="entry name" value="Pro-tRNA-synth_IIa_bac-type"/>
</dbReference>
<dbReference type="InterPro" id="IPR023717">
    <property type="entry name" value="Pro-tRNA-Synthase_IIa_type1"/>
</dbReference>
<dbReference type="InterPro" id="IPR050062">
    <property type="entry name" value="Pro-tRNA_synthetase"/>
</dbReference>
<dbReference type="InterPro" id="IPR044140">
    <property type="entry name" value="ProRS_anticodon_short"/>
</dbReference>
<dbReference type="InterPro" id="IPR033730">
    <property type="entry name" value="ProRS_core_prok"/>
</dbReference>
<dbReference type="InterPro" id="IPR036754">
    <property type="entry name" value="YbaK/aa-tRNA-synt-asso_dom_sf"/>
</dbReference>
<dbReference type="InterPro" id="IPR007214">
    <property type="entry name" value="YbaK/aa-tRNA-synth-assoc-dom"/>
</dbReference>
<dbReference type="NCBIfam" id="NF006625">
    <property type="entry name" value="PRK09194.1"/>
    <property type="match status" value="1"/>
</dbReference>
<dbReference type="NCBIfam" id="TIGR00409">
    <property type="entry name" value="proS_fam_II"/>
    <property type="match status" value="1"/>
</dbReference>
<dbReference type="PANTHER" id="PTHR42753">
    <property type="entry name" value="MITOCHONDRIAL RIBOSOME PROTEIN L39/PROLYL-TRNA LIGASE FAMILY MEMBER"/>
    <property type="match status" value="1"/>
</dbReference>
<dbReference type="PANTHER" id="PTHR42753:SF2">
    <property type="entry name" value="PROLINE--TRNA LIGASE"/>
    <property type="match status" value="1"/>
</dbReference>
<dbReference type="Pfam" id="PF03129">
    <property type="entry name" value="HGTP_anticodon"/>
    <property type="match status" value="1"/>
</dbReference>
<dbReference type="Pfam" id="PF00587">
    <property type="entry name" value="tRNA-synt_2b"/>
    <property type="match status" value="1"/>
</dbReference>
<dbReference type="Pfam" id="PF04073">
    <property type="entry name" value="tRNA_edit"/>
    <property type="match status" value="1"/>
</dbReference>
<dbReference type="PIRSF" id="PIRSF001535">
    <property type="entry name" value="ProRS_1"/>
    <property type="match status" value="1"/>
</dbReference>
<dbReference type="PRINTS" id="PR01046">
    <property type="entry name" value="TRNASYNTHPRO"/>
</dbReference>
<dbReference type="SUPFAM" id="SSF52954">
    <property type="entry name" value="Class II aaRS ABD-related"/>
    <property type="match status" value="1"/>
</dbReference>
<dbReference type="SUPFAM" id="SSF55681">
    <property type="entry name" value="Class II aaRS and biotin synthetases"/>
    <property type="match status" value="1"/>
</dbReference>
<dbReference type="SUPFAM" id="SSF55826">
    <property type="entry name" value="YbaK/ProRS associated domain"/>
    <property type="match status" value="1"/>
</dbReference>
<dbReference type="PROSITE" id="PS50862">
    <property type="entry name" value="AA_TRNA_LIGASE_II"/>
    <property type="match status" value="1"/>
</dbReference>
<organism>
    <name type="scientific">Shewanella woodyi (strain ATCC 51908 / MS32)</name>
    <dbReference type="NCBI Taxonomy" id="392500"/>
    <lineage>
        <taxon>Bacteria</taxon>
        <taxon>Pseudomonadati</taxon>
        <taxon>Pseudomonadota</taxon>
        <taxon>Gammaproteobacteria</taxon>
        <taxon>Alteromonadales</taxon>
        <taxon>Shewanellaceae</taxon>
        <taxon>Shewanella</taxon>
    </lineage>
</organism>
<comment type="function">
    <text evidence="1">Catalyzes the attachment of proline to tRNA(Pro) in a two-step reaction: proline is first activated by ATP to form Pro-AMP and then transferred to the acceptor end of tRNA(Pro). As ProRS can inadvertently accommodate and process non-cognate amino acids such as alanine and cysteine, to avoid such errors it has two additional distinct editing activities against alanine. One activity is designated as 'pretransfer' editing and involves the tRNA(Pro)-independent hydrolysis of activated Ala-AMP. The other activity is designated 'posttransfer' editing and involves deacylation of mischarged Ala-tRNA(Pro). The misacylated Cys-tRNA(Pro) is not edited by ProRS.</text>
</comment>
<comment type="catalytic activity">
    <reaction evidence="1">
        <text>tRNA(Pro) + L-proline + ATP = L-prolyl-tRNA(Pro) + AMP + diphosphate</text>
        <dbReference type="Rhea" id="RHEA:14305"/>
        <dbReference type="Rhea" id="RHEA-COMP:9700"/>
        <dbReference type="Rhea" id="RHEA-COMP:9702"/>
        <dbReference type="ChEBI" id="CHEBI:30616"/>
        <dbReference type="ChEBI" id="CHEBI:33019"/>
        <dbReference type="ChEBI" id="CHEBI:60039"/>
        <dbReference type="ChEBI" id="CHEBI:78442"/>
        <dbReference type="ChEBI" id="CHEBI:78532"/>
        <dbReference type="ChEBI" id="CHEBI:456215"/>
        <dbReference type="EC" id="6.1.1.15"/>
    </reaction>
</comment>
<comment type="subunit">
    <text evidence="1">Homodimer.</text>
</comment>
<comment type="subcellular location">
    <subcellularLocation>
        <location evidence="1">Cytoplasm</location>
    </subcellularLocation>
</comment>
<comment type="domain">
    <text evidence="1">Consists of three domains: the N-terminal catalytic domain, the editing domain and the C-terminal anticodon-binding domain.</text>
</comment>
<comment type="similarity">
    <text evidence="1">Belongs to the class-II aminoacyl-tRNA synthetase family. ProS type 1 subfamily.</text>
</comment>
<name>SYP_SHEWM</name>
<proteinExistence type="inferred from homology"/>
<reference key="1">
    <citation type="submission" date="2008-02" db="EMBL/GenBank/DDBJ databases">
        <title>Complete sequence of Shewanella woodyi ATCC 51908.</title>
        <authorList>
            <consortium name="US DOE Joint Genome Institute"/>
            <person name="Copeland A."/>
            <person name="Lucas S."/>
            <person name="Lapidus A."/>
            <person name="Glavina del Rio T."/>
            <person name="Dalin E."/>
            <person name="Tice H."/>
            <person name="Bruce D."/>
            <person name="Goodwin L."/>
            <person name="Pitluck S."/>
            <person name="Sims D."/>
            <person name="Brettin T."/>
            <person name="Detter J.C."/>
            <person name="Han C."/>
            <person name="Kuske C.R."/>
            <person name="Schmutz J."/>
            <person name="Larimer F."/>
            <person name="Land M."/>
            <person name="Hauser L."/>
            <person name="Kyrpides N."/>
            <person name="Lykidis A."/>
            <person name="Zhao J.-S."/>
            <person name="Richardson P."/>
        </authorList>
    </citation>
    <scope>NUCLEOTIDE SEQUENCE [LARGE SCALE GENOMIC DNA]</scope>
    <source>
        <strain>ATCC 51908 / MS32</strain>
    </source>
</reference>
<accession>B1KNR3</accession>
<evidence type="ECO:0000255" key="1">
    <source>
        <dbReference type="HAMAP-Rule" id="MF_01569"/>
    </source>
</evidence>
<gene>
    <name evidence="1" type="primary">proS</name>
    <name type="ordered locus">Swoo_3251</name>
</gene>
<protein>
    <recommendedName>
        <fullName evidence="1">Proline--tRNA ligase</fullName>
        <ecNumber evidence="1">6.1.1.15</ecNumber>
    </recommendedName>
    <alternativeName>
        <fullName evidence="1">Prolyl-tRNA synthetase</fullName>
        <shortName evidence="1">ProRS</shortName>
    </alternativeName>
</protein>
<sequence>MRVSKYLLSTQKETPADAEVISHQLMLRAGMIRRNASGLYSWLPTGLRVLRKIEAIVREEMNKAGSVEILMPMVQPADLWVETGRFEKFGPELLRFQDRHNRDFVLGPTHEEVITDIVRKEVNSYKQLPLNLFQIQTKFRDEVRPRFGVMRSREFLMKDAYSFHLDQETMDETYESMFQAYSNILTRLGLAFRPVIADTGSIGGSMSHEFHVLANSGEDLIAYSTGSDYAANIEKAESPMPTQTRGEATQEMSLVDTPNAKTIAELVEQHGVAIEKTVKTLIVKGSSEEAPLVALVIRGDHDLNEVKAEKIPAVHAPFEFADEADIRKAVGAGPGSIGPVGLEIPVYIDHGVSVMSDFAAGANQDNKHLFGINWERNLPQAEAFDLRNIIEGEASPCGQGTIALLRGIEVGHIFQLGKNYSEAMNANVLDQNGKAQTLLMGCYGVGVSRMVAAAIEQNHDDRGIIWPDAIAPFRVGILPMNMHKSHRVQDMAEQLYKDLSDAGIEVLFDDRKERAGVMFADMELIGLPHVVVIGDRNIDAGVFEYKNRRTGEKQEVPFDQIVEFLKSAQ</sequence>